<comment type="function">
    <text evidence="1">Specifically methylates the cytosine at position 1407 (m5C1407) of 16S rRNA.</text>
</comment>
<comment type="catalytic activity">
    <reaction evidence="1">
        <text>cytidine(1407) in 16S rRNA + S-adenosyl-L-methionine = 5-methylcytidine(1407) in 16S rRNA + S-adenosyl-L-homocysteine + H(+)</text>
        <dbReference type="Rhea" id="RHEA:42756"/>
        <dbReference type="Rhea" id="RHEA-COMP:10223"/>
        <dbReference type="Rhea" id="RHEA-COMP:10224"/>
        <dbReference type="ChEBI" id="CHEBI:15378"/>
        <dbReference type="ChEBI" id="CHEBI:57856"/>
        <dbReference type="ChEBI" id="CHEBI:59789"/>
        <dbReference type="ChEBI" id="CHEBI:74483"/>
        <dbReference type="ChEBI" id="CHEBI:82748"/>
        <dbReference type="EC" id="2.1.1.178"/>
    </reaction>
</comment>
<comment type="subcellular location">
    <subcellularLocation>
        <location evidence="1">Cytoplasm</location>
    </subcellularLocation>
</comment>
<comment type="similarity">
    <text evidence="1">Belongs to the class I-like SAM-binding methyltransferase superfamily. RsmB/NOP family.</text>
</comment>
<sequence>MAKFTPANLPAEFLDTMRDIMPSSLSMDDFIAACQRPLRRSIRVNTLKISVEAFLRLVQPYGWQLEPIPWCQEGFWLLNAEEENTRLGNTLEHLSGLFYIQEASSMLPVSALFHRNEALETVLDVAAAPGSKTTQIAARLDNKGAIVANEYSASRVKVLHANISRCGVSNTAMTHFDGRVFGAALPEYFDAILLDAPCSGEGVVRKDPAAMSHWSPESITEIAATQRDLILSAFHALKPGGVMIYSTCTLNKQENQQVCHWLQAQFPDACEFESLRDLFTDAERATTEDGFLHVFPQIYDSEGFFVARLRKTASVPPLPRPGYKVGKFPFSPVAPKDCVPLIQAARKQGIHWDETLLQLWQRDSEIWLFPAALASAFGNIKFSRIGIKLAERFPKGFRWQHEAVVALADPNANNAYALTDDIACEWFQGKDCYPEPLPTADELILTYQNTPVGLAKRINSRIKNSLPRDLVRDGASSAQQLAKE</sequence>
<organism>
    <name type="scientific">Pectobacterium carotovorum subsp. carotovorum (strain PC1)</name>
    <dbReference type="NCBI Taxonomy" id="561230"/>
    <lineage>
        <taxon>Bacteria</taxon>
        <taxon>Pseudomonadati</taxon>
        <taxon>Pseudomonadota</taxon>
        <taxon>Gammaproteobacteria</taxon>
        <taxon>Enterobacterales</taxon>
        <taxon>Pectobacteriaceae</taxon>
        <taxon>Pectobacterium</taxon>
    </lineage>
</organism>
<evidence type="ECO:0000255" key="1">
    <source>
        <dbReference type="HAMAP-Rule" id="MF_01579"/>
    </source>
</evidence>
<protein>
    <recommendedName>
        <fullName evidence="1">Ribosomal RNA small subunit methyltransferase F</fullName>
        <ecNumber evidence="1">2.1.1.178</ecNumber>
    </recommendedName>
    <alternativeName>
        <fullName evidence="1">16S rRNA m5C1407 methyltransferase</fullName>
    </alternativeName>
    <alternativeName>
        <fullName evidence="1">rRNA (cytosine-C(5)-)-methyltransferase RsmF</fullName>
    </alternativeName>
</protein>
<keyword id="KW-0963">Cytoplasm</keyword>
<keyword id="KW-0489">Methyltransferase</keyword>
<keyword id="KW-0694">RNA-binding</keyword>
<keyword id="KW-0698">rRNA processing</keyword>
<keyword id="KW-0949">S-adenosyl-L-methionine</keyword>
<keyword id="KW-0808">Transferase</keyword>
<reference key="1">
    <citation type="submission" date="2009-07" db="EMBL/GenBank/DDBJ databases">
        <title>Complete sequence of Pectobacterium carotovorum subsp. carotovorum PC1.</title>
        <authorList>
            <consortium name="US DOE Joint Genome Institute"/>
            <person name="Lucas S."/>
            <person name="Copeland A."/>
            <person name="Lapidus A."/>
            <person name="Glavina del Rio T."/>
            <person name="Tice H."/>
            <person name="Bruce D."/>
            <person name="Goodwin L."/>
            <person name="Pitluck S."/>
            <person name="Munk A.C."/>
            <person name="Brettin T."/>
            <person name="Detter J.C."/>
            <person name="Han C."/>
            <person name="Tapia R."/>
            <person name="Larimer F."/>
            <person name="Land M."/>
            <person name="Hauser L."/>
            <person name="Kyrpides N."/>
            <person name="Mikhailova N."/>
            <person name="Balakrishnan V."/>
            <person name="Glasner J."/>
            <person name="Perna N.T."/>
        </authorList>
    </citation>
    <scope>NUCLEOTIDE SEQUENCE [LARGE SCALE GENOMIC DNA]</scope>
    <source>
        <strain>PC1</strain>
    </source>
</reference>
<dbReference type="EC" id="2.1.1.178" evidence="1"/>
<dbReference type="EMBL" id="CP001657">
    <property type="protein sequence ID" value="ACT12889.1"/>
    <property type="molecule type" value="Genomic_DNA"/>
</dbReference>
<dbReference type="RefSeq" id="WP_015840091.1">
    <property type="nucleotide sequence ID" value="NC_012917.1"/>
</dbReference>
<dbReference type="SMR" id="C6DFU6"/>
<dbReference type="STRING" id="561230.PC1_1848"/>
<dbReference type="KEGG" id="pct:PC1_1848"/>
<dbReference type="eggNOG" id="COG0144">
    <property type="taxonomic scope" value="Bacteria"/>
</dbReference>
<dbReference type="eggNOG" id="COG3270">
    <property type="taxonomic scope" value="Bacteria"/>
</dbReference>
<dbReference type="HOGENOM" id="CLU_005316_6_2_6"/>
<dbReference type="OrthoDB" id="9810297at2"/>
<dbReference type="Proteomes" id="UP000002736">
    <property type="component" value="Chromosome"/>
</dbReference>
<dbReference type="GO" id="GO:0005737">
    <property type="term" value="C:cytoplasm"/>
    <property type="evidence" value="ECO:0007669"/>
    <property type="project" value="UniProtKB-SubCell"/>
</dbReference>
<dbReference type="GO" id="GO:0003723">
    <property type="term" value="F:RNA binding"/>
    <property type="evidence" value="ECO:0007669"/>
    <property type="project" value="UniProtKB-KW"/>
</dbReference>
<dbReference type="GO" id="GO:0009383">
    <property type="term" value="F:rRNA (cytosine-C5-)-methyltransferase activity"/>
    <property type="evidence" value="ECO:0007669"/>
    <property type="project" value="TreeGrafter"/>
</dbReference>
<dbReference type="GO" id="GO:0070475">
    <property type="term" value="P:rRNA base methylation"/>
    <property type="evidence" value="ECO:0007669"/>
    <property type="project" value="TreeGrafter"/>
</dbReference>
<dbReference type="CDD" id="cd02440">
    <property type="entry name" value="AdoMet_MTases"/>
    <property type="match status" value="1"/>
</dbReference>
<dbReference type="Gene3D" id="3.10.450.720">
    <property type="match status" value="1"/>
</dbReference>
<dbReference type="Gene3D" id="3.40.50.150">
    <property type="entry name" value="Vaccinia Virus protein VP39"/>
    <property type="match status" value="1"/>
</dbReference>
<dbReference type="HAMAP" id="MF_01579">
    <property type="entry name" value="16SrRNA_methyltr_F"/>
    <property type="match status" value="1"/>
</dbReference>
<dbReference type="InterPro" id="IPR031341">
    <property type="entry name" value="Methyltr_RsmF_N"/>
</dbReference>
<dbReference type="InterPro" id="IPR049560">
    <property type="entry name" value="MeTrfase_RsmB-F_NOP2_cat"/>
</dbReference>
<dbReference type="InterPro" id="IPR001678">
    <property type="entry name" value="MeTrfase_RsmB-F_NOP2_dom"/>
</dbReference>
<dbReference type="InterPro" id="IPR027391">
    <property type="entry name" value="Nol1_Nop2_Fmu_2"/>
</dbReference>
<dbReference type="InterPro" id="IPR011023">
    <property type="entry name" value="Nop2p"/>
</dbReference>
<dbReference type="InterPro" id="IPR023267">
    <property type="entry name" value="RCMT"/>
</dbReference>
<dbReference type="InterPro" id="IPR023545">
    <property type="entry name" value="rRNA_ssu_MeTfrase_F"/>
</dbReference>
<dbReference type="InterPro" id="IPR018314">
    <property type="entry name" value="RsmB/NOL1/NOP2-like_CS"/>
</dbReference>
<dbReference type="InterPro" id="IPR029063">
    <property type="entry name" value="SAM-dependent_MTases_sf"/>
</dbReference>
<dbReference type="InterPro" id="IPR048457">
    <property type="entry name" value="YebU_pre-PUA_dom"/>
</dbReference>
<dbReference type="NCBIfam" id="TIGR00446">
    <property type="entry name" value="nop2p"/>
    <property type="match status" value="1"/>
</dbReference>
<dbReference type="NCBIfam" id="NF008898">
    <property type="entry name" value="PRK11933.1"/>
    <property type="match status" value="1"/>
</dbReference>
<dbReference type="PANTHER" id="PTHR22807:SF30">
    <property type="entry name" value="28S RRNA (CYTOSINE(4447)-C(5))-METHYLTRANSFERASE-RELATED"/>
    <property type="match status" value="1"/>
</dbReference>
<dbReference type="PANTHER" id="PTHR22807">
    <property type="entry name" value="NOP2 YEAST -RELATED NOL1/NOP2/FMU SUN DOMAIN-CONTAINING"/>
    <property type="match status" value="1"/>
</dbReference>
<dbReference type="Pfam" id="PF01189">
    <property type="entry name" value="Methyltr_RsmB-F"/>
    <property type="match status" value="1"/>
</dbReference>
<dbReference type="Pfam" id="PF17125">
    <property type="entry name" value="Methyltr_RsmF_N"/>
    <property type="match status" value="1"/>
</dbReference>
<dbReference type="Pfam" id="PF13636">
    <property type="entry name" value="Methyltranf_PUA"/>
    <property type="match status" value="1"/>
</dbReference>
<dbReference type="Pfam" id="PF21150">
    <property type="entry name" value="YebU_pre-PUA_dom"/>
    <property type="match status" value="1"/>
</dbReference>
<dbReference type="PRINTS" id="PR02008">
    <property type="entry name" value="RCMTFAMILY"/>
</dbReference>
<dbReference type="SUPFAM" id="SSF53335">
    <property type="entry name" value="S-adenosyl-L-methionine-dependent methyltransferases"/>
    <property type="match status" value="1"/>
</dbReference>
<dbReference type="PROSITE" id="PS01153">
    <property type="entry name" value="NOL1_NOP2_SUN"/>
    <property type="match status" value="1"/>
</dbReference>
<dbReference type="PROSITE" id="PS51686">
    <property type="entry name" value="SAM_MT_RSMB_NOP"/>
    <property type="match status" value="1"/>
</dbReference>
<feature type="chain" id="PRO_1000215616" description="Ribosomal RNA small subunit methyltransferase F">
    <location>
        <begin position="1"/>
        <end position="484"/>
    </location>
</feature>
<feature type="active site" description="Nucleophile" evidence="1">
    <location>
        <position position="248"/>
    </location>
</feature>
<feature type="binding site" evidence="1">
    <location>
        <begin position="126"/>
        <end position="132"/>
    </location>
    <ligand>
        <name>S-adenosyl-L-methionine</name>
        <dbReference type="ChEBI" id="CHEBI:59789"/>
    </ligand>
</feature>
<feature type="binding site" evidence="1">
    <location>
        <position position="150"/>
    </location>
    <ligand>
        <name>S-adenosyl-L-methionine</name>
        <dbReference type="ChEBI" id="CHEBI:59789"/>
    </ligand>
</feature>
<feature type="binding site" evidence="1">
    <location>
        <position position="177"/>
    </location>
    <ligand>
        <name>S-adenosyl-L-methionine</name>
        <dbReference type="ChEBI" id="CHEBI:59789"/>
    </ligand>
</feature>
<feature type="binding site" evidence="1">
    <location>
        <position position="195"/>
    </location>
    <ligand>
        <name>S-adenosyl-L-methionine</name>
        <dbReference type="ChEBI" id="CHEBI:59789"/>
    </ligand>
</feature>
<gene>
    <name evidence="1" type="primary">rsmF</name>
    <name type="ordered locus">PC1_1848</name>
</gene>
<accession>C6DFU6</accession>
<name>RSMF_PECCP</name>
<proteinExistence type="inferred from homology"/>